<geneLocation type="chloroplast"/>
<dbReference type="EMBL" id="EF614270">
    <property type="protein sequence ID" value="ABQ81509.1"/>
    <property type="molecule type" value="Genomic_DNA"/>
</dbReference>
<dbReference type="RefSeq" id="YP_001542505.1">
    <property type="nucleotide sequence ID" value="NC_009962.1"/>
</dbReference>
<dbReference type="SMR" id="A8SEG5"/>
<dbReference type="GeneID" id="5729460"/>
<dbReference type="GO" id="GO:0009706">
    <property type="term" value="C:chloroplast inner membrane"/>
    <property type="evidence" value="ECO:0007669"/>
    <property type="project" value="UniProtKB-SubCell"/>
</dbReference>
<dbReference type="GO" id="GO:0015031">
    <property type="term" value="P:protein transport"/>
    <property type="evidence" value="ECO:0007669"/>
    <property type="project" value="UniProtKB-KW"/>
</dbReference>
<dbReference type="InterPro" id="IPR008896">
    <property type="entry name" value="TIC214"/>
</dbReference>
<dbReference type="PANTHER" id="PTHR33163:SF40">
    <property type="entry name" value="PROTEIN TIC 214"/>
    <property type="match status" value="1"/>
</dbReference>
<dbReference type="PANTHER" id="PTHR33163">
    <property type="entry name" value="PROTEIN TIC 214-RELATED"/>
    <property type="match status" value="1"/>
</dbReference>
<dbReference type="Pfam" id="PF05758">
    <property type="entry name" value="Ycf1"/>
    <property type="match status" value="1"/>
</dbReference>
<name>TI214_CERDE</name>
<organism>
    <name type="scientific">Ceratophyllum demersum</name>
    <name type="common">Rigid hornwort</name>
    <name type="synonym">Coontail</name>
    <dbReference type="NCBI Taxonomy" id="4428"/>
    <lineage>
        <taxon>Eukaryota</taxon>
        <taxon>Viridiplantae</taxon>
        <taxon>Streptophyta</taxon>
        <taxon>Embryophyta</taxon>
        <taxon>Tracheophyta</taxon>
        <taxon>Spermatophyta</taxon>
        <taxon>Magnoliopsida</taxon>
        <taxon>Ceratophyllales</taxon>
        <taxon>Ceratophyllaceae</taxon>
        <taxon>Ceratophyllum</taxon>
    </lineage>
</organism>
<evidence type="ECO:0000250" key="1">
    <source>
        <dbReference type="UniProtKB" id="P56785"/>
    </source>
</evidence>
<evidence type="ECO:0000255" key="2"/>
<evidence type="ECO:0000256" key="3">
    <source>
        <dbReference type="SAM" id="MobiDB-lite"/>
    </source>
</evidence>
<evidence type="ECO:0000305" key="4"/>
<feature type="chain" id="PRO_0000326565" description="Protein TIC 214">
    <location>
        <begin position="1"/>
        <end position="1899"/>
    </location>
</feature>
<feature type="transmembrane region" description="Helical" evidence="2">
    <location>
        <begin position="23"/>
        <end position="43"/>
    </location>
</feature>
<feature type="transmembrane region" description="Helical" evidence="2">
    <location>
        <begin position="64"/>
        <end position="84"/>
    </location>
</feature>
<feature type="transmembrane region" description="Helical" evidence="2">
    <location>
        <begin position="87"/>
        <end position="107"/>
    </location>
</feature>
<feature type="transmembrane region" description="Helical" evidence="2">
    <location>
        <begin position="124"/>
        <end position="144"/>
    </location>
</feature>
<feature type="transmembrane region" description="Helical" evidence="2">
    <location>
        <begin position="172"/>
        <end position="192"/>
    </location>
</feature>
<feature type="transmembrane region" description="Helical" evidence="2">
    <location>
        <begin position="217"/>
        <end position="237"/>
    </location>
</feature>
<feature type="region of interest" description="Disordered" evidence="3">
    <location>
        <begin position="256"/>
        <end position="280"/>
    </location>
</feature>
<feature type="region of interest" description="Disordered" evidence="3">
    <location>
        <begin position="1581"/>
        <end position="1619"/>
    </location>
</feature>
<feature type="compositionally biased region" description="Basic and acidic residues" evidence="3">
    <location>
        <begin position="269"/>
        <end position="280"/>
    </location>
</feature>
<reference key="1">
    <citation type="journal article" date="2007" name="Proc. Natl. Acad. Sci. U.S.A.">
        <title>Using plastid genome-scale data to resolve enigmatic relationships among basal angiosperms.</title>
        <authorList>
            <person name="Moore M.J."/>
            <person name="Bell C.D."/>
            <person name="Soltis P.S."/>
            <person name="Soltis D.E."/>
        </authorList>
    </citation>
    <scope>NUCLEOTIDE SEQUENCE [LARGE SCALE GENOMIC DNA]</scope>
</reference>
<gene>
    <name evidence="1" type="primary">TIC214</name>
    <name type="synonym">ycf1</name>
</gene>
<protein>
    <recommendedName>
        <fullName evidence="1">Protein TIC 214</fullName>
    </recommendedName>
    <alternativeName>
        <fullName evidence="1">Translocon at the inner envelope membrane of chloroplasts 214</fullName>
        <shortName evidence="1">AtTIC214</shortName>
    </alternativeName>
</protein>
<accession>A8SEG5</accession>
<keyword id="KW-0150">Chloroplast</keyword>
<keyword id="KW-0472">Membrane</keyword>
<keyword id="KW-0934">Plastid</keyword>
<keyword id="KW-1001">Plastid inner membrane</keyword>
<keyword id="KW-0653">Protein transport</keyword>
<keyword id="KW-0812">Transmembrane</keyword>
<keyword id="KW-1133">Transmembrane helix</keyword>
<keyword id="KW-0813">Transport</keyword>
<proteinExistence type="inferred from homology"/>
<comment type="function">
    <text evidence="1">Involved in protein precursor import into chloroplasts. May be part of an intermediate translocation complex acting as a protein-conducting channel at the inner envelope.</text>
</comment>
<comment type="subunit">
    <text evidence="1">Part of the Tic complex.</text>
</comment>
<comment type="subcellular location">
    <subcellularLocation>
        <location evidence="1">Plastid</location>
        <location evidence="1">Chloroplast inner membrane</location>
        <topology evidence="2">Multi-pass membrane protein</topology>
    </subcellularLocation>
</comment>
<comment type="similarity">
    <text evidence="4">Belongs to the TIC214 family.</text>
</comment>
<sequence>MILKSFILGNLVSLCMKIINSAVVVGLYYGFLTTFSIGPSYLFLLRARVMEEGTEKEVSATTGFITGQLMMFISIYYVPLHLALVRPHTITVLVLPYLLFHFFWNNHKNFFDYGYTTRNSMRNLSIQCLFLNNLIVQFLNLFILPSSTLSRLVNISLFRCNNKMLFVTSSFVGWLIGHILFMKLVGLVLVCIRQNLATRSNRLLHSNMYLVSEFRNWTARIFSTLLFITCMYYLGVHRVKLPILTNRLKKTSEIAEQKKSKEETDEEIEKTFETKETKKEQQEFTDKVHSLYFEEQEDPIEEQGYPYKRNETKEKRLGKEKTKDEFHKNIPKYETLDLDRNQEKKLELTILKQKTNLVWFEKPLVTLLFDVKRWDRPLRHIKNSRFENTIKQEMAQYFFHTCTSDGKQKISFTYPPSLSTFFEMMQRKISLCTIEKQSPENMYNHWLYTNEQKRHNLSNEFLNRIEILDKGSSALDVLEQKNRLSNDENKQECLPKMYDPFLSGPSRGRIKKGYSTRRIMNDSSASTKGKKVWINKIHGIFPIDYVQLEHKIDTFLDESLSGESGTSFPGESAPLKGLSLSTDKKRIDSENQEKSLKFLFDVVTTNPNTQTRDKESILIREIHKRVPQWSYKLIRDLEEEEKETEEEPKQVFGIRLRKGKRVVIYTDTNDKTNTDTSTSTPSNPAEEIALIRYSHQPDFRRNLIKGSIRSQRRKTVVWELFQTNLHSPLFLDRIDKTFSFDIYRIMDLFFRSWMWKEPELKTSKSESEVEEKEEKVKKQKEKKDENERIAIAEAWDTFIVTQAVRGLMLVTQSIFRKYIVLPSLIIVKNIGRMLLFQFPEWSEDFKDWKREMHVKCTYNGVQLSETEFPKHWLTDGIQIKILFPFCLKPWHESKLRSHHITHEHEMDAMKKKGKEQNFCFLTVWGMEAELPFGYARKRPSFFEPIFKELTKKIQKVKKICFLVLRTFKEGAKGLVKVLKEKASWVIKIVLFIKKKIKELAKIFFFGFGLREVEVEVYESNENGKDSITNNNIINELPIRIRSVNWTNDSLTEKKIKDLADRTTTIQNEIERIKKEKKILFMTPDKNVSPNKLSCNDKRSESQKFFWQISKRKGARLIRKWHYFFKSFIERIYIGIFLCTIYIPKINAKLFLESKKNLQKFFDKSIYNNETNPDGIDETNKNAVHFISTLKKALFNISDKNSSISCDLSYLSQAYVFYKLSQTQVINKYDLRYVFQYQGAHSFLKDRIKDYLQTRGIFHSESRQNPFRNSEINDWKNWLRGHYQYNLSQTRWSRLVPQQWKNRVNQRHRIQKKDSQKWHSYEQDQLIHYKTKKNYAVHSLPMQKEKLKKHYRYDLLSHKYLNFEDRNNSYIYGSPLQVNGDREITYNYKTHKSKSFCTLGGLTISDYLKEEYLIDTDKNSDRKYFDLGIIYFSLRKNIDIKAWIDKNIGTNTNININKKIKTGNTFYQISDKKNLFDLTISQQRNSSNQKTKKTKKFGFLDWMGMNKQMLDHSISNFEPSWFLPEFCLLYDAYKVKPWIMPTKLLLLNLDTNENIRNQNENIRKSNKINGNKKQDFRISSNPKDYLELDNGTPKEKEKQGKVKGNLGSNQKTRENLGLDLRNQQKNVENDYVGSDIKKRRKKKQFNNNKETELDSILTNYLVFQLRWNPFLNKGIMKNIKVDCLLLRLINPKEIAIDSIQSGEMHLDLMSIQRDPSLTKLIKDGIFVIEPRRLSIKRDGQFIKYQTIGISLVHKRKYQTNRGYPENKYIDENDFYGSISQHGKMFVNGDENHYDLIVPENILSTRRRRELRIRNCLNSGNTENRNPVFFDSTNVRNCGKFLDEDKYLDTDIQKLIKFKLFLWPNFRLEDLACINRYWFDTNNGSRFSMLRIHMYPRFIVS</sequence>